<gene>
    <name evidence="1" type="primary">ilvC</name>
    <name type="ordered locus">HP_0330</name>
</gene>
<proteinExistence type="inferred from homology"/>
<keyword id="KW-0028">Amino-acid biosynthesis</keyword>
<keyword id="KW-0100">Branched-chain amino acid biosynthesis</keyword>
<keyword id="KW-0460">Magnesium</keyword>
<keyword id="KW-0479">Metal-binding</keyword>
<keyword id="KW-0521">NADP</keyword>
<keyword id="KW-0560">Oxidoreductase</keyword>
<keyword id="KW-1185">Reference proteome</keyword>
<name>ILVC_HELPY</name>
<comment type="function">
    <text evidence="1">Involved in the biosynthesis of branched-chain amino acids (BCAA). Catalyzes an alkyl-migration followed by a ketol-acid reduction of (S)-2-acetolactate (S2AL) to yield (R)-2,3-dihydroxy-isovalerate. In the isomerase reaction, S2AL is rearranged via a Mg-dependent methyl migration to produce 3-hydroxy-3-methyl-2-ketobutyrate (HMKB). In the reductase reaction, this 2-ketoacid undergoes a metal-dependent reduction by NADPH to yield (R)-2,3-dihydroxy-isovalerate.</text>
</comment>
<comment type="catalytic activity">
    <reaction evidence="1">
        <text>(2R)-2,3-dihydroxy-3-methylbutanoate + NADP(+) = (2S)-2-acetolactate + NADPH + H(+)</text>
        <dbReference type="Rhea" id="RHEA:22068"/>
        <dbReference type="ChEBI" id="CHEBI:15378"/>
        <dbReference type="ChEBI" id="CHEBI:49072"/>
        <dbReference type="ChEBI" id="CHEBI:57783"/>
        <dbReference type="ChEBI" id="CHEBI:58349"/>
        <dbReference type="ChEBI" id="CHEBI:58476"/>
        <dbReference type="EC" id="1.1.1.86"/>
    </reaction>
</comment>
<comment type="catalytic activity">
    <reaction evidence="1">
        <text>(2R,3R)-2,3-dihydroxy-3-methylpentanoate + NADP(+) = (S)-2-ethyl-2-hydroxy-3-oxobutanoate + NADPH + H(+)</text>
        <dbReference type="Rhea" id="RHEA:13493"/>
        <dbReference type="ChEBI" id="CHEBI:15378"/>
        <dbReference type="ChEBI" id="CHEBI:49256"/>
        <dbReference type="ChEBI" id="CHEBI:49258"/>
        <dbReference type="ChEBI" id="CHEBI:57783"/>
        <dbReference type="ChEBI" id="CHEBI:58349"/>
        <dbReference type="EC" id="1.1.1.86"/>
    </reaction>
</comment>
<comment type="cofactor">
    <cofactor evidence="1">
        <name>Mg(2+)</name>
        <dbReference type="ChEBI" id="CHEBI:18420"/>
    </cofactor>
    <text evidence="1">Binds 2 magnesium ions per subunit.</text>
</comment>
<comment type="pathway">
    <text evidence="1">Amino-acid biosynthesis; L-isoleucine biosynthesis; L-isoleucine from 2-oxobutanoate: step 2/4.</text>
</comment>
<comment type="pathway">
    <text evidence="1">Amino-acid biosynthesis; L-valine biosynthesis; L-valine from pyruvate: step 2/4.</text>
</comment>
<comment type="similarity">
    <text evidence="1">Belongs to the ketol-acid reductoisomerase family.</text>
</comment>
<dbReference type="EC" id="1.1.1.86" evidence="1"/>
<dbReference type="EMBL" id="AE000511">
    <property type="protein sequence ID" value="AAD07399.1"/>
    <property type="molecule type" value="Genomic_DNA"/>
</dbReference>
<dbReference type="PIR" id="B64561">
    <property type="entry name" value="B64561"/>
</dbReference>
<dbReference type="RefSeq" id="NP_207128.1">
    <property type="nucleotide sequence ID" value="NC_000915.1"/>
</dbReference>
<dbReference type="RefSeq" id="WP_001207734.1">
    <property type="nucleotide sequence ID" value="NC_018939.1"/>
</dbReference>
<dbReference type="SMR" id="O25097"/>
<dbReference type="FunCoup" id="O25097">
    <property type="interactions" value="347"/>
</dbReference>
<dbReference type="STRING" id="85962.HP_0330"/>
<dbReference type="PaxDb" id="85962-C694_01670"/>
<dbReference type="EnsemblBacteria" id="AAD07399">
    <property type="protein sequence ID" value="AAD07399"/>
    <property type="gene ID" value="HP_0330"/>
</dbReference>
<dbReference type="KEGG" id="heo:C694_01670"/>
<dbReference type="KEGG" id="hpy:HP_0330"/>
<dbReference type="PATRIC" id="fig|85962.47.peg.352"/>
<dbReference type="eggNOG" id="COG0059">
    <property type="taxonomic scope" value="Bacteria"/>
</dbReference>
<dbReference type="InParanoid" id="O25097"/>
<dbReference type="OrthoDB" id="9804088at2"/>
<dbReference type="PhylomeDB" id="O25097"/>
<dbReference type="UniPathway" id="UPA00047">
    <property type="reaction ID" value="UER00056"/>
</dbReference>
<dbReference type="UniPathway" id="UPA00049">
    <property type="reaction ID" value="UER00060"/>
</dbReference>
<dbReference type="Proteomes" id="UP000000429">
    <property type="component" value="Chromosome"/>
</dbReference>
<dbReference type="GO" id="GO:0005829">
    <property type="term" value="C:cytosol"/>
    <property type="evidence" value="ECO:0000318"/>
    <property type="project" value="GO_Central"/>
</dbReference>
<dbReference type="GO" id="GO:0004455">
    <property type="term" value="F:ketol-acid reductoisomerase activity"/>
    <property type="evidence" value="ECO:0000318"/>
    <property type="project" value="GO_Central"/>
</dbReference>
<dbReference type="GO" id="GO:0000287">
    <property type="term" value="F:magnesium ion binding"/>
    <property type="evidence" value="ECO:0007669"/>
    <property type="project" value="UniProtKB-UniRule"/>
</dbReference>
<dbReference type="GO" id="GO:0050661">
    <property type="term" value="F:NADP binding"/>
    <property type="evidence" value="ECO:0007669"/>
    <property type="project" value="InterPro"/>
</dbReference>
<dbReference type="GO" id="GO:0009097">
    <property type="term" value="P:isoleucine biosynthetic process"/>
    <property type="evidence" value="ECO:0000318"/>
    <property type="project" value="GO_Central"/>
</dbReference>
<dbReference type="GO" id="GO:0009099">
    <property type="term" value="P:L-valine biosynthetic process"/>
    <property type="evidence" value="ECO:0000318"/>
    <property type="project" value="GO_Central"/>
</dbReference>
<dbReference type="Gene3D" id="6.10.240.10">
    <property type="match status" value="1"/>
</dbReference>
<dbReference type="Gene3D" id="3.40.50.720">
    <property type="entry name" value="NAD(P)-binding Rossmann-like Domain"/>
    <property type="match status" value="1"/>
</dbReference>
<dbReference type="HAMAP" id="MF_00435">
    <property type="entry name" value="IlvC"/>
    <property type="match status" value="1"/>
</dbReference>
<dbReference type="InterPro" id="IPR008927">
    <property type="entry name" value="6-PGluconate_DH-like_C_sf"/>
</dbReference>
<dbReference type="InterPro" id="IPR013023">
    <property type="entry name" value="KARI"/>
</dbReference>
<dbReference type="InterPro" id="IPR000506">
    <property type="entry name" value="KARI_C"/>
</dbReference>
<dbReference type="InterPro" id="IPR013116">
    <property type="entry name" value="KARI_N"/>
</dbReference>
<dbReference type="InterPro" id="IPR014359">
    <property type="entry name" value="KARI_prok"/>
</dbReference>
<dbReference type="InterPro" id="IPR036291">
    <property type="entry name" value="NAD(P)-bd_dom_sf"/>
</dbReference>
<dbReference type="NCBIfam" id="TIGR00465">
    <property type="entry name" value="ilvC"/>
    <property type="match status" value="1"/>
</dbReference>
<dbReference type="NCBIfam" id="NF004017">
    <property type="entry name" value="PRK05479.1"/>
    <property type="match status" value="1"/>
</dbReference>
<dbReference type="PANTHER" id="PTHR21371">
    <property type="entry name" value="KETOL-ACID REDUCTOISOMERASE, MITOCHONDRIAL"/>
    <property type="match status" value="1"/>
</dbReference>
<dbReference type="PANTHER" id="PTHR21371:SF1">
    <property type="entry name" value="KETOL-ACID REDUCTOISOMERASE, MITOCHONDRIAL"/>
    <property type="match status" value="1"/>
</dbReference>
<dbReference type="Pfam" id="PF01450">
    <property type="entry name" value="KARI_C"/>
    <property type="match status" value="1"/>
</dbReference>
<dbReference type="Pfam" id="PF07991">
    <property type="entry name" value="KARI_N"/>
    <property type="match status" value="1"/>
</dbReference>
<dbReference type="PIRSF" id="PIRSF000116">
    <property type="entry name" value="IlvC_gammaproteo"/>
    <property type="match status" value="1"/>
</dbReference>
<dbReference type="SUPFAM" id="SSF48179">
    <property type="entry name" value="6-phosphogluconate dehydrogenase C-terminal domain-like"/>
    <property type="match status" value="1"/>
</dbReference>
<dbReference type="SUPFAM" id="SSF51735">
    <property type="entry name" value="NAD(P)-binding Rossmann-fold domains"/>
    <property type="match status" value="1"/>
</dbReference>
<dbReference type="PROSITE" id="PS51851">
    <property type="entry name" value="KARI_C"/>
    <property type="match status" value="1"/>
</dbReference>
<dbReference type="PROSITE" id="PS51850">
    <property type="entry name" value="KARI_N"/>
    <property type="match status" value="1"/>
</dbReference>
<protein>
    <recommendedName>
        <fullName evidence="1">Ketol-acid reductoisomerase (NADP(+))</fullName>
        <shortName evidence="1">KARI</shortName>
        <ecNumber evidence="1">1.1.1.86</ecNumber>
    </recommendedName>
    <alternativeName>
        <fullName evidence="1">Acetohydroxy-acid isomeroreductase</fullName>
        <shortName evidence="1">AHIR</shortName>
    </alternativeName>
    <alternativeName>
        <fullName evidence="1">Alpha-keto-beta-hydroxylacyl reductoisomerase</fullName>
    </alternativeName>
    <alternativeName>
        <fullName evidence="1">Ketol-acid reductoisomerase type 1</fullName>
    </alternativeName>
    <alternativeName>
        <fullName evidence="1">Ketol-acid reductoisomerase type I</fullName>
    </alternativeName>
</protein>
<sequence>MALPVYYDKDIDLGVIQSLQVGIIGYGAQGEAQALNLRDSKVKARIGLYQGSLSVSKAKKEGFEVLEVKELVQNSDVIMALLPDELHKEVLEKEVIPFLKEGQIVGFAHGFSVHFNQVVLPKGVGAILVAPKGPGSALREEYLKNRGLYHLIAIEQESSIHNAKAVALSYAKAMGGGRMGVLETSFKEECESDLFGEQAVLCGGLEAIVRMGFETLIKAGYPEELAYFECVHEVKLVADLLHYKGVEGLRKHISNTAEFGAIKAREPMGKLLKKRMQKILKKIQNGSFAKDFLLEKSLNYPRLNTERKALKETKIEQIGEILRAPFNHKK</sequence>
<feature type="chain" id="PRO_0000151316" description="Ketol-acid reductoisomerase (NADP(+))">
    <location>
        <begin position="1"/>
        <end position="330"/>
    </location>
</feature>
<feature type="domain" description="KARI N-terminal Rossmann" evidence="2">
    <location>
        <begin position="3"/>
        <end position="184"/>
    </location>
</feature>
<feature type="domain" description="KARI C-terminal knotted" evidence="3">
    <location>
        <begin position="185"/>
        <end position="329"/>
    </location>
</feature>
<feature type="active site" evidence="1">
    <location>
        <position position="109"/>
    </location>
</feature>
<feature type="binding site" evidence="1">
    <location>
        <begin position="26"/>
        <end position="29"/>
    </location>
    <ligand>
        <name>NADP(+)</name>
        <dbReference type="ChEBI" id="CHEBI:58349"/>
    </ligand>
</feature>
<feature type="binding site" evidence="1">
    <location>
        <position position="52"/>
    </location>
    <ligand>
        <name>NADP(+)</name>
        <dbReference type="ChEBI" id="CHEBI:58349"/>
    </ligand>
</feature>
<feature type="binding site" evidence="1">
    <location>
        <position position="54"/>
    </location>
    <ligand>
        <name>NADP(+)</name>
        <dbReference type="ChEBI" id="CHEBI:58349"/>
    </ligand>
</feature>
<feature type="binding site" evidence="1">
    <location>
        <position position="135"/>
    </location>
    <ligand>
        <name>NADP(+)</name>
        <dbReference type="ChEBI" id="CHEBI:58349"/>
    </ligand>
</feature>
<feature type="binding site" evidence="1">
    <location>
        <position position="193"/>
    </location>
    <ligand>
        <name>Mg(2+)</name>
        <dbReference type="ChEBI" id="CHEBI:18420"/>
        <label>1</label>
    </ligand>
</feature>
<feature type="binding site" evidence="1">
    <location>
        <position position="193"/>
    </location>
    <ligand>
        <name>Mg(2+)</name>
        <dbReference type="ChEBI" id="CHEBI:18420"/>
        <label>2</label>
    </ligand>
</feature>
<feature type="binding site" evidence="1">
    <location>
        <position position="197"/>
    </location>
    <ligand>
        <name>Mg(2+)</name>
        <dbReference type="ChEBI" id="CHEBI:18420"/>
        <label>1</label>
    </ligand>
</feature>
<feature type="binding site" evidence="1">
    <location>
        <position position="229"/>
    </location>
    <ligand>
        <name>Mg(2+)</name>
        <dbReference type="ChEBI" id="CHEBI:18420"/>
        <label>2</label>
    </ligand>
</feature>
<feature type="binding site" evidence="1">
    <location>
        <position position="233"/>
    </location>
    <ligand>
        <name>Mg(2+)</name>
        <dbReference type="ChEBI" id="CHEBI:18420"/>
        <label>2</label>
    </ligand>
</feature>
<feature type="binding site" evidence="1">
    <location>
        <position position="254"/>
    </location>
    <ligand>
        <name>substrate</name>
    </ligand>
</feature>
<evidence type="ECO:0000255" key="1">
    <source>
        <dbReference type="HAMAP-Rule" id="MF_00435"/>
    </source>
</evidence>
<evidence type="ECO:0000255" key="2">
    <source>
        <dbReference type="PROSITE-ProRule" id="PRU01197"/>
    </source>
</evidence>
<evidence type="ECO:0000255" key="3">
    <source>
        <dbReference type="PROSITE-ProRule" id="PRU01198"/>
    </source>
</evidence>
<reference key="1">
    <citation type="journal article" date="1997" name="Nature">
        <title>The complete genome sequence of the gastric pathogen Helicobacter pylori.</title>
        <authorList>
            <person name="Tomb J.-F."/>
            <person name="White O."/>
            <person name="Kerlavage A.R."/>
            <person name="Clayton R.A."/>
            <person name="Sutton G.G."/>
            <person name="Fleischmann R.D."/>
            <person name="Ketchum K.A."/>
            <person name="Klenk H.-P."/>
            <person name="Gill S.R."/>
            <person name="Dougherty B.A."/>
            <person name="Nelson K.E."/>
            <person name="Quackenbush J."/>
            <person name="Zhou L."/>
            <person name="Kirkness E.F."/>
            <person name="Peterson S.N."/>
            <person name="Loftus B.J."/>
            <person name="Richardson D.L."/>
            <person name="Dodson R.J."/>
            <person name="Khalak H.G."/>
            <person name="Glodek A."/>
            <person name="McKenney K."/>
            <person name="FitzGerald L.M."/>
            <person name="Lee N."/>
            <person name="Adams M.D."/>
            <person name="Hickey E.K."/>
            <person name="Berg D.E."/>
            <person name="Gocayne J.D."/>
            <person name="Utterback T.R."/>
            <person name="Peterson J.D."/>
            <person name="Kelley J.M."/>
            <person name="Cotton M.D."/>
            <person name="Weidman J.F."/>
            <person name="Fujii C."/>
            <person name="Bowman C."/>
            <person name="Watthey L."/>
            <person name="Wallin E."/>
            <person name="Hayes W.S."/>
            <person name="Borodovsky M."/>
            <person name="Karp P.D."/>
            <person name="Smith H.O."/>
            <person name="Fraser C.M."/>
            <person name="Venter J.C."/>
        </authorList>
    </citation>
    <scope>NUCLEOTIDE SEQUENCE [LARGE SCALE GENOMIC DNA]</scope>
    <source>
        <strain>ATCC 700392 / 26695</strain>
    </source>
</reference>
<organism>
    <name type="scientific">Helicobacter pylori (strain ATCC 700392 / 26695)</name>
    <name type="common">Campylobacter pylori</name>
    <dbReference type="NCBI Taxonomy" id="85962"/>
    <lineage>
        <taxon>Bacteria</taxon>
        <taxon>Pseudomonadati</taxon>
        <taxon>Campylobacterota</taxon>
        <taxon>Epsilonproteobacteria</taxon>
        <taxon>Campylobacterales</taxon>
        <taxon>Helicobacteraceae</taxon>
        <taxon>Helicobacter</taxon>
    </lineage>
</organism>
<accession>O25097</accession>